<feature type="chain" id="PRO_0000092261" description="Sulfate/thiosulfate import ATP-binding protein CysA">
    <location>
        <begin position="1"/>
        <end position="351"/>
    </location>
</feature>
<feature type="domain" description="ABC transporter" evidence="1">
    <location>
        <begin position="3"/>
        <end position="237"/>
    </location>
</feature>
<feature type="binding site" evidence="1">
    <location>
        <begin position="35"/>
        <end position="42"/>
    </location>
    <ligand>
        <name>ATP</name>
        <dbReference type="ChEBI" id="CHEBI:30616"/>
    </ligand>
</feature>
<protein>
    <recommendedName>
        <fullName evidence="1">Sulfate/thiosulfate import ATP-binding protein CysA</fullName>
        <ecNumber evidence="1">7.3.2.3</ecNumber>
    </recommendedName>
    <alternativeName>
        <fullName evidence="1">Sulfate-transporting ATPase</fullName>
    </alternativeName>
</protein>
<comment type="function">
    <text evidence="1">Part of the ABC transporter complex CysAWTP involved in sulfate/thiosulfate import. Responsible for energy coupling to the transport system.</text>
</comment>
<comment type="catalytic activity">
    <reaction evidence="1">
        <text>sulfate(out) + ATP + H2O = sulfate(in) + ADP + phosphate + H(+)</text>
        <dbReference type="Rhea" id="RHEA:10192"/>
        <dbReference type="ChEBI" id="CHEBI:15377"/>
        <dbReference type="ChEBI" id="CHEBI:15378"/>
        <dbReference type="ChEBI" id="CHEBI:16189"/>
        <dbReference type="ChEBI" id="CHEBI:30616"/>
        <dbReference type="ChEBI" id="CHEBI:43474"/>
        <dbReference type="ChEBI" id="CHEBI:456216"/>
        <dbReference type="EC" id="7.3.2.3"/>
    </reaction>
</comment>
<comment type="catalytic activity">
    <reaction evidence="1">
        <text>thiosulfate(out) + ATP + H2O = thiosulfate(in) + ADP + phosphate + H(+)</text>
        <dbReference type="Rhea" id="RHEA:29871"/>
        <dbReference type="ChEBI" id="CHEBI:15377"/>
        <dbReference type="ChEBI" id="CHEBI:15378"/>
        <dbReference type="ChEBI" id="CHEBI:30616"/>
        <dbReference type="ChEBI" id="CHEBI:33542"/>
        <dbReference type="ChEBI" id="CHEBI:43474"/>
        <dbReference type="ChEBI" id="CHEBI:456216"/>
        <dbReference type="EC" id="7.3.2.3"/>
    </reaction>
</comment>
<comment type="subunit">
    <text evidence="1">The complex is composed of two ATP-binding proteins (CysA), two transmembrane proteins (CysT and CysW) and a solute-binding protein (CysP).</text>
</comment>
<comment type="subcellular location">
    <subcellularLocation>
        <location evidence="1">Cell inner membrane</location>
        <topology evidence="1">Peripheral membrane protein</topology>
    </subcellularLocation>
</comment>
<comment type="similarity">
    <text evidence="1">Belongs to the ABC transporter superfamily. Sulfate/tungstate importer (TC 3.A.1.6) family.</text>
</comment>
<accession>Q63TY1</accession>
<proteinExistence type="inferred from homology"/>
<name>CYSA_BURPS</name>
<reference key="1">
    <citation type="journal article" date="2004" name="Proc. Natl. Acad. Sci. U.S.A.">
        <title>Genomic plasticity of the causative agent of melioidosis, Burkholderia pseudomallei.</title>
        <authorList>
            <person name="Holden M.T.G."/>
            <person name="Titball R.W."/>
            <person name="Peacock S.J."/>
            <person name="Cerdeno-Tarraga A.-M."/>
            <person name="Atkins T."/>
            <person name="Crossman L.C."/>
            <person name="Pitt T."/>
            <person name="Churcher C."/>
            <person name="Mungall K.L."/>
            <person name="Bentley S.D."/>
            <person name="Sebaihia M."/>
            <person name="Thomson N.R."/>
            <person name="Bason N."/>
            <person name="Beacham I.R."/>
            <person name="Brooks K."/>
            <person name="Brown K.A."/>
            <person name="Brown N.F."/>
            <person name="Challis G.L."/>
            <person name="Cherevach I."/>
            <person name="Chillingworth T."/>
            <person name="Cronin A."/>
            <person name="Crossett B."/>
            <person name="Davis P."/>
            <person name="DeShazer D."/>
            <person name="Feltwell T."/>
            <person name="Fraser A."/>
            <person name="Hance Z."/>
            <person name="Hauser H."/>
            <person name="Holroyd S."/>
            <person name="Jagels K."/>
            <person name="Keith K.E."/>
            <person name="Maddison M."/>
            <person name="Moule S."/>
            <person name="Price C."/>
            <person name="Quail M.A."/>
            <person name="Rabbinowitsch E."/>
            <person name="Rutherford K."/>
            <person name="Sanders M."/>
            <person name="Simmonds M."/>
            <person name="Songsivilai S."/>
            <person name="Stevens K."/>
            <person name="Tumapa S."/>
            <person name="Vesaratchavest M."/>
            <person name="Whitehead S."/>
            <person name="Yeats C."/>
            <person name="Barrell B.G."/>
            <person name="Oyston P.C.F."/>
            <person name="Parkhill J."/>
        </authorList>
    </citation>
    <scope>NUCLEOTIDE SEQUENCE [LARGE SCALE GENOMIC DNA]</scope>
    <source>
        <strain>K96243</strain>
    </source>
</reference>
<sequence>MGITVRNLHKRFGEFAALDDVSLDFPAGELVALLGPSGCGKTTLLRVIAGLEHADSGQVVLQGLDVASVGARERQVGFVFQHYALFRHMTVFENVAFGLRVKPRRERPSEAAIRAKVHELLSLVQLDWLAQRYPSELSGGQRQRIALARALAVEPKVLLLDEPFGALDAKVRKELRGWLRRLHDDLHISTIFVTHDQEEALEVADRIVVLNHGRVEQVGSPQAVYDHPRSAFVYEFLGAANRLDGTVSGNGFVAHGAAQAIAVDADFAGPARAYVRPHDLELAAPYARAQGIAADVRRVVRLGGSVRVELAARSGEVLEAELDRNAWRALALDVGDALTAVPRAVRVFPAR</sequence>
<dbReference type="EC" id="7.3.2.3" evidence="1"/>
<dbReference type="EMBL" id="BX571965">
    <property type="protein sequence ID" value="CAH35835.1"/>
    <property type="molecule type" value="Genomic_DNA"/>
</dbReference>
<dbReference type="RefSeq" id="WP_004536166.1">
    <property type="nucleotide sequence ID" value="NZ_CP009538.1"/>
</dbReference>
<dbReference type="RefSeq" id="YP_108435.1">
    <property type="nucleotide sequence ID" value="NC_006350.1"/>
</dbReference>
<dbReference type="SMR" id="Q63TY1"/>
<dbReference type="STRING" id="272560.BPSL1836"/>
<dbReference type="KEGG" id="bps:BPSL1836"/>
<dbReference type="PATRIC" id="fig|272560.51.peg.3962"/>
<dbReference type="eggNOG" id="COG1118">
    <property type="taxonomic scope" value="Bacteria"/>
</dbReference>
<dbReference type="Proteomes" id="UP000000605">
    <property type="component" value="Chromosome 1"/>
</dbReference>
<dbReference type="GO" id="GO:0043190">
    <property type="term" value="C:ATP-binding cassette (ABC) transporter complex"/>
    <property type="evidence" value="ECO:0007669"/>
    <property type="project" value="InterPro"/>
</dbReference>
<dbReference type="GO" id="GO:0015419">
    <property type="term" value="F:ABC-type sulfate transporter activity"/>
    <property type="evidence" value="ECO:0007669"/>
    <property type="project" value="InterPro"/>
</dbReference>
<dbReference type="GO" id="GO:0102025">
    <property type="term" value="F:ABC-type thiosulfate transporter activity"/>
    <property type="evidence" value="ECO:0007669"/>
    <property type="project" value="RHEA"/>
</dbReference>
<dbReference type="GO" id="GO:0005524">
    <property type="term" value="F:ATP binding"/>
    <property type="evidence" value="ECO:0007669"/>
    <property type="project" value="UniProtKB-KW"/>
</dbReference>
<dbReference type="GO" id="GO:0016887">
    <property type="term" value="F:ATP hydrolysis activity"/>
    <property type="evidence" value="ECO:0007669"/>
    <property type="project" value="InterPro"/>
</dbReference>
<dbReference type="CDD" id="cd03296">
    <property type="entry name" value="ABC_CysA_sulfate_importer"/>
    <property type="match status" value="1"/>
</dbReference>
<dbReference type="FunFam" id="3.40.50.300:FF:000227">
    <property type="entry name" value="Sulfate/thiosulfate import ATP-binding protein CysA"/>
    <property type="match status" value="1"/>
</dbReference>
<dbReference type="Gene3D" id="3.40.50.300">
    <property type="entry name" value="P-loop containing nucleotide triphosphate hydrolases"/>
    <property type="match status" value="1"/>
</dbReference>
<dbReference type="InterPro" id="IPR003593">
    <property type="entry name" value="AAA+_ATPase"/>
</dbReference>
<dbReference type="InterPro" id="IPR050093">
    <property type="entry name" value="ABC_SmlMolc_Importer"/>
</dbReference>
<dbReference type="InterPro" id="IPR003439">
    <property type="entry name" value="ABC_transporter-like_ATP-bd"/>
</dbReference>
<dbReference type="InterPro" id="IPR017871">
    <property type="entry name" value="ABC_transporter-like_CS"/>
</dbReference>
<dbReference type="InterPro" id="IPR008995">
    <property type="entry name" value="Mo/tungstate-bd_C_term_dom"/>
</dbReference>
<dbReference type="InterPro" id="IPR027417">
    <property type="entry name" value="P-loop_NTPase"/>
</dbReference>
<dbReference type="InterPro" id="IPR005666">
    <property type="entry name" value="Sulph_transpt1"/>
</dbReference>
<dbReference type="InterPro" id="IPR024765">
    <property type="entry name" value="TOBE-like"/>
</dbReference>
<dbReference type="NCBIfam" id="TIGR00968">
    <property type="entry name" value="3a0106s01"/>
    <property type="match status" value="1"/>
</dbReference>
<dbReference type="PANTHER" id="PTHR42781">
    <property type="entry name" value="SPERMIDINE/PUTRESCINE IMPORT ATP-BINDING PROTEIN POTA"/>
    <property type="match status" value="1"/>
</dbReference>
<dbReference type="PANTHER" id="PTHR42781:SF4">
    <property type="entry name" value="SPERMIDINE_PUTRESCINE IMPORT ATP-BINDING PROTEIN POTA"/>
    <property type="match status" value="1"/>
</dbReference>
<dbReference type="Pfam" id="PF00005">
    <property type="entry name" value="ABC_tran"/>
    <property type="match status" value="1"/>
</dbReference>
<dbReference type="Pfam" id="PF12857">
    <property type="entry name" value="TOBE_3"/>
    <property type="match status" value="1"/>
</dbReference>
<dbReference type="SMART" id="SM00382">
    <property type="entry name" value="AAA"/>
    <property type="match status" value="1"/>
</dbReference>
<dbReference type="SUPFAM" id="SSF50331">
    <property type="entry name" value="MOP-like"/>
    <property type="match status" value="1"/>
</dbReference>
<dbReference type="SUPFAM" id="SSF52540">
    <property type="entry name" value="P-loop containing nucleoside triphosphate hydrolases"/>
    <property type="match status" value="1"/>
</dbReference>
<dbReference type="PROSITE" id="PS00211">
    <property type="entry name" value="ABC_TRANSPORTER_1"/>
    <property type="match status" value="1"/>
</dbReference>
<dbReference type="PROSITE" id="PS50893">
    <property type="entry name" value="ABC_TRANSPORTER_2"/>
    <property type="match status" value="1"/>
</dbReference>
<dbReference type="PROSITE" id="PS51237">
    <property type="entry name" value="CYSA"/>
    <property type="match status" value="1"/>
</dbReference>
<keyword id="KW-0067">ATP-binding</keyword>
<keyword id="KW-0997">Cell inner membrane</keyword>
<keyword id="KW-1003">Cell membrane</keyword>
<keyword id="KW-0472">Membrane</keyword>
<keyword id="KW-0547">Nucleotide-binding</keyword>
<keyword id="KW-1185">Reference proteome</keyword>
<keyword id="KW-0764">Sulfate transport</keyword>
<keyword id="KW-1278">Translocase</keyword>
<keyword id="KW-0813">Transport</keyword>
<organism>
    <name type="scientific">Burkholderia pseudomallei (strain K96243)</name>
    <dbReference type="NCBI Taxonomy" id="272560"/>
    <lineage>
        <taxon>Bacteria</taxon>
        <taxon>Pseudomonadati</taxon>
        <taxon>Pseudomonadota</taxon>
        <taxon>Betaproteobacteria</taxon>
        <taxon>Burkholderiales</taxon>
        <taxon>Burkholderiaceae</taxon>
        <taxon>Burkholderia</taxon>
        <taxon>pseudomallei group</taxon>
    </lineage>
</organism>
<evidence type="ECO:0000255" key="1">
    <source>
        <dbReference type="HAMAP-Rule" id="MF_01701"/>
    </source>
</evidence>
<gene>
    <name evidence="1" type="primary">cysA</name>
    <name type="ordered locus">BPSL1836</name>
</gene>